<organism>
    <name type="scientific">Mus musculus</name>
    <name type="common">Mouse</name>
    <dbReference type="NCBI Taxonomy" id="10090"/>
    <lineage>
        <taxon>Eukaryota</taxon>
        <taxon>Metazoa</taxon>
        <taxon>Chordata</taxon>
        <taxon>Craniata</taxon>
        <taxon>Vertebrata</taxon>
        <taxon>Euteleostomi</taxon>
        <taxon>Mammalia</taxon>
        <taxon>Eutheria</taxon>
        <taxon>Euarchontoglires</taxon>
        <taxon>Glires</taxon>
        <taxon>Rodentia</taxon>
        <taxon>Myomorpha</taxon>
        <taxon>Muroidea</taxon>
        <taxon>Muridae</taxon>
        <taxon>Murinae</taxon>
        <taxon>Mus</taxon>
        <taxon>Mus</taxon>
    </lineage>
</organism>
<keyword id="KW-0963">Cytoplasm</keyword>
<keyword id="KW-0221">Differentiation</keyword>
<keyword id="KW-0896">Oogenesis</keyword>
<keyword id="KW-1185">Reference proteome</keyword>
<keyword id="KW-0677">Repeat</keyword>
<keyword id="KW-0694">RNA-binding</keyword>
<sequence length="607" mass="67433">MDTGGHGCSLSSLYVGDLHPDVTESMLYEMFSPIGNILSIRVCRDVATRRSLGYAYINFQQPADAERALDTMNFEVIKGQPIRIMWSHRDPGLRKSGMGNIFIKNLENSIDNKALYDTFSTFGSILSSKVVYNEHGSRGFGFVHFETHEAAQKAINTMNGMLLNDRKVFVGHFKSRQKREAELGARALGFTNIYVKNLHANVDEQRLQDLFSQFGNMQSVKVMRDSNGQSRGFGFVNFEKHEEAQKAVDHMNGKEVSGQLLYVGRAQKRAERQSELKRRFEQMKQERQNRYQGVNLYVKNLDDSINDERLKEVFSTYGVITSAKVMTESSHSKGFGFVCFSSPEEATKAVTEMNGRIVGTKPLYVALAQRKEERKAILTNQYRRRPSHPVLSSFQQPTSYLLPAVPQSTAQAVYYSSGSITPMQPDPRWTAQPHGPPSTCPPAASVVQPLSTTQHPCIHLRGASQVSSQVPHTQRVVNIGTQTTGPGGEGSSIPGQLLVPHRGTSAVHSAHGVQESAVYVPGHQPLTVSMLAAAPLHEQKQMIGERLYSLIHDACAPLTGKITGMLLELDNLELLLLLESPESLHAKIEEAVAVLQVHREMESTDRN</sequence>
<dbReference type="EMBL" id="EU669908">
    <property type="protein sequence ID" value="ACD43645.1"/>
    <property type="molecule type" value="mRNA"/>
</dbReference>
<dbReference type="EMBL" id="AL591542">
    <property type="status" value="NOT_ANNOTATED_CDS"/>
    <property type="molecule type" value="Genomic_DNA"/>
</dbReference>
<dbReference type="RefSeq" id="NP_001107551.1">
    <property type="nucleotide sequence ID" value="NM_001114079.2"/>
</dbReference>
<dbReference type="SMR" id="A2A5N3"/>
<dbReference type="FunCoup" id="A2A5N3">
    <property type="interactions" value="997"/>
</dbReference>
<dbReference type="STRING" id="10090.ENSMUSP00000096701"/>
<dbReference type="GlyGen" id="A2A5N3">
    <property type="glycosylation" value="1 site, 1 O-linked glycan (1 site)"/>
</dbReference>
<dbReference type="PhosphoSitePlus" id="A2A5N3"/>
<dbReference type="PaxDb" id="10090-ENSMUSP00000096701"/>
<dbReference type="PeptideAtlas" id="A2A5N3"/>
<dbReference type="ProteomicsDB" id="337161"/>
<dbReference type="Antibodypedia" id="72120">
    <property type="antibodies" value="62 antibodies from 8 providers"/>
</dbReference>
<dbReference type="Ensembl" id="ENSMUST00000067715.5">
    <property type="protein sequence ID" value="ENSMUSP00000096701.4"/>
    <property type="gene ID" value="ENSMUSG00000054582.5"/>
</dbReference>
<dbReference type="GeneID" id="381404"/>
<dbReference type="KEGG" id="mmu:381404"/>
<dbReference type="UCSC" id="uc012cix.2">
    <property type="organism name" value="mouse"/>
</dbReference>
<dbReference type="AGR" id="MGI:1922908"/>
<dbReference type="CTD" id="80336"/>
<dbReference type="MGI" id="MGI:1922908">
    <property type="gene designation" value="Pabpc1l"/>
</dbReference>
<dbReference type="VEuPathDB" id="HostDB:ENSMUSG00000054582"/>
<dbReference type="eggNOG" id="KOG0123">
    <property type="taxonomic scope" value="Eukaryota"/>
</dbReference>
<dbReference type="GeneTree" id="ENSGT00940000157106"/>
<dbReference type="HOGENOM" id="CLU_012062_22_2_1"/>
<dbReference type="OMA" id="DHMNGKE"/>
<dbReference type="OrthoDB" id="19742at2759"/>
<dbReference type="TreeFam" id="TF300458"/>
<dbReference type="BioGRID-ORCS" id="381404">
    <property type="hits" value="2 hits in 80 CRISPR screens"/>
</dbReference>
<dbReference type="ChiTaRS" id="Pabpc1">
    <property type="organism name" value="mouse"/>
</dbReference>
<dbReference type="Proteomes" id="UP000000589">
    <property type="component" value="Chromosome 2"/>
</dbReference>
<dbReference type="Bgee" id="ENSMUSG00000054582">
    <property type="expression patterns" value="Expressed in granulocyte and 83 other cell types or tissues"/>
</dbReference>
<dbReference type="GO" id="GO:0005737">
    <property type="term" value="C:cytoplasm"/>
    <property type="evidence" value="ECO:0007669"/>
    <property type="project" value="UniProtKB-SubCell"/>
</dbReference>
<dbReference type="GO" id="GO:0008143">
    <property type="term" value="F:poly(A) binding"/>
    <property type="evidence" value="ECO:0000304"/>
    <property type="project" value="MGI"/>
</dbReference>
<dbReference type="GO" id="GO:0006338">
    <property type="term" value="P:chromatin remodeling"/>
    <property type="evidence" value="ECO:0000314"/>
    <property type="project" value="MGI"/>
</dbReference>
<dbReference type="GO" id="GO:0180011">
    <property type="term" value="P:cytosolic mRNA polyadenylation"/>
    <property type="evidence" value="ECO:0000315"/>
    <property type="project" value="MGI"/>
</dbReference>
<dbReference type="GO" id="GO:0051647">
    <property type="term" value="P:nucleus localization"/>
    <property type="evidence" value="ECO:0000315"/>
    <property type="project" value="MGI"/>
</dbReference>
<dbReference type="GO" id="GO:0001556">
    <property type="term" value="P:oocyte maturation"/>
    <property type="evidence" value="ECO:0000314"/>
    <property type="project" value="MGI"/>
</dbReference>
<dbReference type="GO" id="GO:0045815">
    <property type="term" value="P:transcription initiation-coupled chromatin remodeling"/>
    <property type="evidence" value="ECO:0000315"/>
    <property type="project" value="MGI"/>
</dbReference>
<dbReference type="CDD" id="cd12378">
    <property type="entry name" value="RRM1_I_PABPs"/>
    <property type="match status" value="1"/>
</dbReference>
<dbReference type="CDD" id="cd12379">
    <property type="entry name" value="RRM2_I_PABPs"/>
    <property type="match status" value="1"/>
</dbReference>
<dbReference type="CDD" id="cd12380">
    <property type="entry name" value="RRM3_I_PABPs"/>
    <property type="match status" value="1"/>
</dbReference>
<dbReference type="CDD" id="cd12381">
    <property type="entry name" value="RRM4_I_PABPs"/>
    <property type="match status" value="1"/>
</dbReference>
<dbReference type="FunFam" id="3.30.70.330:FF:000003">
    <property type="entry name" value="Polyadenylate-binding protein"/>
    <property type="match status" value="1"/>
</dbReference>
<dbReference type="FunFam" id="3.30.70.330:FF:000021">
    <property type="entry name" value="Polyadenylate-binding protein"/>
    <property type="match status" value="1"/>
</dbReference>
<dbReference type="FunFam" id="3.30.70.330:FF:000049">
    <property type="entry name" value="Polyadenylate-binding protein"/>
    <property type="match status" value="1"/>
</dbReference>
<dbReference type="FunFam" id="3.30.70.330:FF:000091">
    <property type="entry name" value="Polyadenylate-binding protein"/>
    <property type="match status" value="1"/>
</dbReference>
<dbReference type="Gene3D" id="3.30.70.330">
    <property type="match status" value="4"/>
</dbReference>
<dbReference type="Gene3D" id="1.10.1900.10">
    <property type="entry name" value="c-terminal domain of poly(a) binding protein"/>
    <property type="match status" value="1"/>
</dbReference>
<dbReference type="InterPro" id="IPR012677">
    <property type="entry name" value="Nucleotide-bd_a/b_plait_sf"/>
</dbReference>
<dbReference type="InterPro" id="IPR036053">
    <property type="entry name" value="PABP-dom"/>
</dbReference>
<dbReference type="InterPro" id="IPR006515">
    <property type="entry name" value="PABP_1234"/>
</dbReference>
<dbReference type="InterPro" id="IPR002004">
    <property type="entry name" value="PABP_HYD_C"/>
</dbReference>
<dbReference type="InterPro" id="IPR034364">
    <property type="entry name" value="PABP_RRM1"/>
</dbReference>
<dbReference type="InterPro" id="IPR035979">
    <property type="entry name" value="RBD_domain_sf"/>
</dbReference>
<dbReference type="InterPro" id="IPR045305">
    <property type="entry name" value="RRM2_I_PABPs"/>
</dbReference>
<dbReference type="InterPro" id="IPR000504">
    <property type="entry name" value="RRM_dom"/>
</dbReference>
<dbReference type="InterPro" id="IPR003954">
    <property type="entry name" value="RRM_dom_euk"/>
</dbReference>
<dbReference type="NCBIfam" id="TIGR01628">
    <property type="entry name" value="PABP-1234"/>
    <property type="match status" value="1"/>
</dbReference>
<dbReference type="PANTHER" id="PTHR24012">
    <property type="entry name" value="RNA BINDING PROTEIN"/>
    <property type="match status" value="1"/>
</dbReference>
<dbReference type="Pfam" id="PF00658">
    <property type="entry name" value="MLLE"/>
    <property type="match status" value="1"/>
</dbReference>
<dbReference type="Pfam" id="PF00076">
    <property type="entry name" value="RRM_1"/>
    <property type="match status" value="4"/>
</dbReference>
<dbReference type="SMART" id="SM00517">
    <property type="entry name" value="PolyA"/>
    <property type="match status" value="1"/>
</dbReference>
<dbReference type="SMART" id="SM00360">
    <property type="entry name" value="RRM"/>
    <property type="match status" value="4"/>
</dbReference>
<dbReference type="SMART" id="SM00361">
    <property type="entry name" value="RRM_1"/>
    <property type="match status" value="4"/>
</dbReference>
<dbReference type="SUPFAM" id="SSF63570">
    <property type="entry name" value="PABC (PABP) domain"/>
    <property type="match status" value="1"/>
</dbReference>
<dbReference type="SUPFAM" id="SSF54928">
    <property type="entry name" value="RNA-binding domain, RBD"/>
    <property type="match status" value="2"/>
</dbReference>
<dbReference type="PROSITE" id="PS51309">
    <property type="entry name" value="PABC"/>
    <property type="match status" value="1"/>
</dbReference>
<dbReference type="PROSITE" id="PS50102">
    <property type="entry name" value="RRM"/>
    <property type="match status" value="4"/>
</dbReference>
<comment type="function">
    <text evidence="5 6">Poly(A)-binding protein involved in oocyte maturation and early embryo development (PubMed:22621333, PubMed:37052235). It is required for cytosolic mRNA polyadenylation and translational activation of maternally stored mRNA in oocytes (PubMed:22621333).</text>
</comment>
<comment type="subcellular location">
    <subcellularLocation>
        <location evidence="1">Cytoplasm</location>
    </subcellularLocation>
</comment>
<comment type="tissue specificity">
    <text evidence="4">Expressed in ovary and testis.</text>
</comment>
<comment type="developmental stage">
    <text evidence="4">Expressed in prophase I and metaphase II oocytes, and in one-cell and two-cell embryos. It is undetectable in 4-cell embryos and later stages.</text>
</comment>
<comment type="disruption phenotype">
    <text evidence="6">Knockout female are infertile, produce a significantly lower number of mature oocytes compared to wild-type female, and do not generate 2-cell embryos. Upon stimulation of maturation, PABPC1L-deficient oocytes fail to achieve translational activation of stored mRNAs including mRNAs for CCNB1, MOS and DAZL.</text>
</comment>
<comment type="similarity">
    <text evidence="9">Belongs to the polyadenylate-binding protein type-1 family.</text>
</comment>
<name>PAP1L_MOUSE</name>
<evidence type="ECO:0000250" key="1">
    <source>
        <dbReference type="UniProtKB" id="Q4VXU2"/>
    </source>
</evidence>
<evidence type="ECO:0000255" key="2">
    <source>
        <dbReference type="PROSITE-ProRule" id="PRU00176"/>
    </source>
</evidence>
<evidence type="ECO:0000255" key="3">
    <source>
        <dbReference type="PROSITE-ProRule" id="PRU00641"/>
    </source>
</evidence>
<evidence type="ECO:0000269" key="4">
    <source>
    </source>
</evidence>
<evidence type="ECO:0000269" key="5">
    <source>
    </source>
</evidence>
<evidence type="ECO:0000269" key="6">
    <source>
    </source>
</evidence>
<evidence type="ECO:0000303" key="7">
    <source>
    </source>
</evidence>
<evidence type="ECO:0000303" key="8">
    <source>
    </source>
</evidence>
<evidence type="ECO:0000305" key="9"/>
<evidence type="ECO:0000312" key="10">
    <source>
        <dbReference type="MGI" id="MGI:1922908"/>
    </source>
</evidence>
<feature type="chain" id="PRO_0000462457" description="Polyadenylate-binding protein 1-like">
    <location>
        <begin position="1"/>
        <end position="607"/>
    </location>
</feature>
<feature type="domain" description="RRM 1" evidence="2">
    <location>
        <begin position="11"/>
        <end position="89"/>
    </location>
</feature>
<feature type="domain" description="RRM 2" evidence="2">
    <location>
        <begin position="99"/>
        <end position="175"/>
    </location>
</feature>
<feature type="domain" description="RRM 3" evidence="2">
    <location>
        <begin position="191"/>
        <end position="268"/>
    </location>
</feature>
<feature type="domain" description="RRM 4" evidence="2">
    <location>
        <begin position="294"/>
        <end position="370"/>
    </location>
</feature>
<feature type="domain" description="PABC" evidence="3">
    <location>
        <begin position="523"/>
        <end position="600"/>
    </location>
</feature>
<feature type="mutagenesis site" description="Knockin female mice exhibit early embryonic arrest and infertility. MOS expression and activation of the MAPK signaling pathway are abnormally up-regulated in knockin zygotes." evidence="6">
    <original>G</original>
    <variation>D</variation>
    <location>
        <position position="97"/>
    </location>
</feature>
<feature type="mutagenesis site" description="Knockin female mice exhibit early embryonic arrest and infertility. MOS expression and activation of the MAPK signaling pathway are abnormally up-regulated in knockin zygotes." evidence="6">
    <original>S</original>
    <variation>F</variation>
    <location>
        <position position="137"/>
    </location>
</feature>
<feature type="mutagenesis site" description="Knockin female mice exhibit early embryonic arrest and infertility." evidence="6">
    <original>R</original>
    <variation>Q</variation>
    <location>
        <position position="374"/>
    </location>
</feature>
<accession>A2A5N3</accession>
<proteinExistence type="evidence at protein level"/>
<protein>
    <recommendedName>
        <fullName>Polyadenylate-binding protein 1-like</fullName>
    </recommendedName>
    <alternativeName>
        <fullName evidence="7 8">Embryonic poly(A)-binding protein</fullName>
    </alternativeName>
    <alternativeName>
        <fullName evidence="10">Poly(A) binding protein, cytoplasmic 1-like</fullName>
    </alternativeName>
</protein>
<gene>
    <name evidence="10" type="primary">Pabpc1l</name>
    <name evidence="7 8 10" type="synonym">Epab</name>
</gene>
<reference key="1">
    <citation type="journal article" date="2005" name="Proc. Natl. Acad. Sci. U.S.A.">
        <title>An embryonic poly(A)-binding protein (ePAB) is expressed in mouse oocytes and early preimplantation embryos.</title>
        <authorList>
            <person name="Seli E."/>
            <person name="Lalioti M.D."/>
            <person name="Flaherty S.M."/>
            <person name="Sakkas D."/>
            <person name="Terzi N."/>
            <person name="Steitz J.A."/>
        </authorList>
    </citation>
    <scope>NUCLEOTIDE SEQUENCE [MRNA]</scope>
    <scope>TISSUE SPECIFICITY</scope>
    <scope>DEVELOPMENTAL STAGE</scope>
    <source>
        <strain>C57BL/6J</strain>
    </source>
</reference>
<reference key="2">
    <citation type="journal article" date="2009" name="PLoS Biol.">
        <title>Lineage-specific biology revealed by a finished genome assembly of the mouse.</title>
        <authorList>
            <person name="Church D.M."/>
            <person name="Goodstadt L."/>
            <person name="Hillier L.W."/>
            <person name="Zody M.C."/>
            <person name="Goldstein S."/>
            <person name="She X."/>
            <person name="Bult C.J."/>
            <person name="Agarwala R."/>
            <person name="Cherry J.L."/>
            <person name="DiCuccio M."/>
            <person name="Hlavina W."/>
            <person name="Kapustin Y."/>
            <person name="Meric P."/>
            <person name="Maglott D."/>
            <person name="Birtle Z."/>
            <person name="Marques A.C."/>
            <person name="Graves T."/>
            <person name="Zhou S."/>
            <person name="Teague B."/>
            <person name="Potamousis K."/>
            <person name="Churas C."/>
            <person name="Place M."/>
            <person name="Herschleb J."/>
            <person name="Runnheim R."/>
            <person name="Forrest D."/>
            <person name="Amos-Landgraf J."/>
            <person name="Schwartz D.C."/>
            <person name="Cheng Z."/>
            <person name="Lindblad-Toh K."/>
            <person name="Eichler E.E."/>
            <person name="Ponting C.P."/>
        </authorList>
    </citation>
    <scope>NUCLEOTIDE SEQUENCE [LARGE SCALE GENOMIC DNA]</scope>
    <source>
        <strain>C57BL/6J</strain>
    </source>
</reference>
<reference key="3">
    <citation type="journal article" date="2012" name="Biochem. J.">
        <title>Embryonic poly(A)-binding protein (EPAB) is required for oocyte maturation and female fertility in mice.</title>
        <authorList>
            <person name="Guzeloglu-Kayisli O."/>
            <person name="Lalioti M.D."/>
            <person name="Aydiner F."/>
            <person name="Sasson I."/>
            <person name="Ilbay O."/>
            <person name="Sakkas D."/>
            <person name="Lowther K.M."/>
            <person name="Mehlmann L.M."/>
            <person name="Seli E."/>
        </authorList>
    </citation>
    <scope>FUNCTION</scope>
    <scope>DISRUPTION PHENOTYPE</scope>
</reference>
<reference key="4">
    <citation type="journal article" date="2023" name="EMBO Mol. Med.">
        <title>Bi-allelic pathogenic variants in PABPC1L cause oocyte maturation arrest and female infertility.</title>
        <authorList>
            <person name="Wang W."/>
            <person name="Guo J."/>
            <person name="Shi J."/>
            <person name="Li Q."/>
            <person name="Chen B."/>
            <person name="Pan Z."/>
            <person name="Qu R."/>
            <person name="Fu J."/>
            <person name="Shi R."/>
            <person name="Xue X."/>
            <person name="Mu J."/>
            <person name="Zhang Z."/>
            <person name="Wu T."/>
            <person name="Wang W."/>
            <person name="Zhao L."/>
            <person name="Li Q."/>
            <person name="He L."/>
            <person name="Sun X."/>
            <person name="Sang Q."/>
            <person name="Lin G."/>
            <person name="Wang L."/>
        </authorList>
    </citation>
    <scope>FUNCTION</scope>
    <scope>MUTAGENESIS OF GLY-97; SER-137 AND ARG-374</scope>
</reference>